<evidence type="ECO:0000255" key="1">
    <source>
        <dbReference type="HAMAP-Rule" id="MF_01547"/>
    </source>
</evidence>
<name>RLME_BORDL</name>
<proteinExistence type="inferred from homology"/>
<reference key="1">
    <citation type="journal article" date="2008" name="PLoS Genet.">
        <title>The genome of Borrelia recurrentis, the agent of deadly louse-borne relapsing fever, is a degraded subset of tick-borne Borrelia duttonii.</title>
        <authorList>
            <person name="Lescot M."/>
            <person name="Audic S."/>
            <person name="Robert C."/>
            <person name="Nguyen T.T."/>
            <person name="Blanc G."/>
            <person name="Cutler S.J."/>
            <person name="Wincker P."/>
            <person name="Couloux A."/>
            <person name="Claverie J.-M."/>
            <person name="Raoult D."/>
            <person name="Drancourt M."/>
        </authorList>
    </citation>
    <scope>NUCLEOTIDE SEQUENCE [LARGE SCALE GENOMIC DNA]</scope>
    <source>
        <strain>Ly</strain>
    </source>
</reference>
<organism>
    <name type="scientific">Borrelia duttonii (strain Ly)</name>
    <dbReference type="NCBI Taxonomy" id="412419"/>
    <lineage>
        <taxon>Bacteria</taxon>
        <taxon>Pseudomonadati</taxon>
        <taxon>Spirochaetota</taxon>
        <taxon>Spirochaetia</taxon>
        <taxon>Spirochaetales</taxon>
        <taxon>Borreliaceae</taxon>
        <taxon>Borrelia</taxon>
    </lineage>
</organism>
<accession>B5RLD9</accession>
<protein>
    <recommendedName>
        <fullName evidence="1">Ribosomal RNA large subunit methyltransferase E</fullName>
        <ecNumber evidence="1">2.1.1.166</ecNumber>
    </recommendedName>
    <alternativeName>
        <fullName evidence="1">23S rRNA Um2552 methyltransferase</fullName>
    </alternativeName>
    <alternativeName>
        <fullName evidence="1">rRNA (uridine-2'-O-)-methyltransferase</fullName>
    </alternativeName>
</protein>
<comment type="function">
    <text evidence="1">Specifically methylates the uridine in position 2552 of 23S rRNA at the 2'-O position of the ribose in the fully assembled 50S ribosomal subunit.</text>
</comment>
<comment type="catalytic activity">
    <reaction evidence="1">
        <text>uridine(2552) in 23S rRNA + S-adenosyl-L-methionine = 2'-O-methyluridine(2552) in 23S rRNA + S-adenosyl-L-homocysteine + H(+)</text>
        <dbReference type="Rhea" id="RHEA:42720"/>
        <dbReference type="Rhea" id="RHEA-COMP:10202"/>
        <dbReference type="Rhea" id="RHEA-COMP:10203"/>
        <dbReference type="ChEBI" id="CHEBI:15378"/>
        <dbReference type="ChEBI" id="CHEBI:57856"/>
        <dbReference type="ChEBI" id="CHEBI:59789"/>
        <dbReference type="ChEBI" id="CHEBI:65315"/>
        <dbReference type="ChEBI" id="CHEBI:74478"/>
        <dbReference type="EC" id="2.1.1.166"/>
    </reaction>
</comment>
<comment type="subcellular location">
    <subcellularLocation>
        <location evidence="1">Cytoplasm</location>
    </subcellularLocation>
</comment>
<comment type="similarity">
    <text evidence="1">Belongs to the class I-like SAM-binding methyltransferase superfamily. RNA methyltransferase RlmE family.</text>
</comment>
<feature type="chain" id="PRO_1000215447" description="Ribosomal RNA large subunit methyltransferase E">
    <location>
        <begin position="1"/>
        <end position="193"/>
    </location>
</feature>
<feature type="active site" description="Proton acceptor" evidence="1">
    <location>
        <position position="147"/>
    </location>
</feature>
<feature type="binding site" evidence="1">
    <location>
        <position position="48"/>
    </location>
    <ligand>
        <name>S-adenosyl-L-methionine</name>
        <dbReference type="ChEBI" id="CHEBI:59789"/>
    </ligand>
</feature>
<feature type="binding site" evidence="1">
    <location>
        <position position="50"/>
    </location>
    <ligand>
        <name>S-adenosyl-L-methionine</name>
        <dbReference type="ChEBI" id="CHEBI:59789"/>
    </ligand>
</feature>
<feature type="binding site" evidence="1">
    <location>
        <position position="67"/>
    </location>
    <ligand>
        <name>S-adenosyl-L-methionine</name>
        <dbReference type="ChEBI" id="CHEBI:59789"/>
    </ligand>
</feature>
<feature type="binding site" evidence="1">
    <location>
        <position position="85"/>
    </location>
    <ligand>
        <name>S-adenosyl-L-methionine</name>
        <dbReference type="ChEBI" id="CHEBI:59789"/>
    </ligand>
</feature>
<feature type="binding site" evidence="1">
    <location>
        <position position="107"/>
    </location>
    <ligand>
        <name>S-adenosyl-L-methionine</name>
        <dbReference type="ChEBI" id="CHEBI:59789"/>
    </ligand>
</feature>
<keyword id="KW-0963">Cytoplasm</keyword>
<keyword id="KW-0489">Methyltransferase</keyword>
<keyword id="KW-0698">rRNA processing</keyword>
<keyword id="KW-0949">S-adenosyl-L-methionine</keyword>
<keyword id="KW-0808">Transferase</keyword>
<gene>
    <name evidence="1" type="primary">rlmE</name>
    <name evidence="1" type="synonym">ftsJ</name>
    <name evidence="1" type="synonym">rrmJ</name>
    <name type="ordered locus">BDU_316</name>
</gene>
<dbReference type="EC" id="2.1.1.166" evidence="1"/>
<dbReference type="EMBL" id="CP000976">
    <property type="protein sequence ID" value="ACH93268.1"/>
    <property type="molecule type" value="Genomic_DNA"/>
</dbReference>
<dbReference type="RefSeq" id="WP_012538079.1">
    <property type="nucleotide sequence ID" value="NC_011229.1"/>
</dbReference>
<dbReference type="SMR" id="B5RLD9"/>
<dbReference type="STRING" id="412419.BDU_316"/>
<dbReference type="KEGG" id="bdu:BDU_316"/>
<dbReference type="eggNOG" id="COG0293">
    <property type="taxonomic scope" value="Bacteria"/>
</dbReference>
<dbReference type="HOGENOM" id="CLU_009422_4_4_12"/>
<dbReference type="OrthoDB" id="154490at2"/>
<dbReference type="Proteomes" id="UP000000611">
    <property type="component" value="Chromosome"/>
</dbReference>
<dbReference type="GO" id="GO:0005737">
    <property type="term" value="C:cytoplasm"/>
    <property type="evidence" value="ECO:0007669"/>
    <property type="project" value="UniProtKB-SubCell"/>
</dbReference>
<dbReference type="GO" id="GO:0008650">
    <property type="term" value="F:rRNA (uridine-2'-O-)-methyltransferase activity"/>
    <property type="evidence" value="ECO:0007669"/>
    <property type="project" value="UniProtKB-UniRule"/>
</dbReference>
<dbReference type="Gene3D" id="3.40.50.150">
    <property type="entry name" value="Vaccinia Virus protein VP39"/>
    <property type="match status" value="1"/>
</dbReference>
<dbReference type="HAMAP" id="MF_01547">
    <property type="entry name" value="RNA_methyltr_E"/>
    <property type="match status" value="1"/>
</dbReference>
<dbReference type="InterPro" id="IPR050082">
    <property type="entry name" value="RNA_methyltr_RlmE"/>
</dbReference>
<dbReference type="InterPro" id="IPR002877">
    <property type="entry name" value="RNA_MeTrfase_FtsJ_dom"/>
</dbReference>
<dbReference type="InterPro" id="IPR015507">
    <property type="entry name" value="rRNA-MeTfrase_E"/>
</dbReference>
<dbReference type="InterPro" id="IPR029063">
    <property type="entry name" value="SAM-dependent_MTases_sf"/>
</dbReference>
<dbReference type="PANTHER" id="PTHR10920">
    <property type="entry name" value="RIBOSOMAL RNA METHYLTRANSFERASE"/>
    <property type="match status" value="1"/>
</dbReference>
<dbReference type="PANTHER" id="PTHR10920:SF18">
    <property type="entry name" value="RRNA METHYLTRANSFERASE 2, MITOCHONDRIAL"/>
    <property type="match status" value="1"/>
</dbReference>
<dbReference type="Pfam" id="PF01728">
    <property type="entry name" value="FtsJ"/>
    <property type="match status" value="1"/>
</dbReference>
<dbReference type="PIRSF" id="PIRSF005461">
    <property type="entry name" value="23S_rRNA_mtase"/>
    <property type="match status" value="1"/>
</dbReference>
<dbReference type="SUPFAM" id="SSF53335">
    <property type="entry name" value="S-adenosyl-L-methionine-dependent methyltransferases"/>
    <property type="match status" value="1"/>
</dbReference>
<sequence>MYNVFDEYSQKAKNEGYLARSVYKLIEIDKKFSLFSSGNILDIGASPGSFSQYAYANLKNGVLVAVDLNDVNLNFTSNFYFIKGNIYLDEVYQKIKIFSPYSLIVSDAAPSTTGNRLVDTSNSFNLNIRIFELACESLMRGGNLLIKVFQGGEEEQIFYKLKSCFRVVKKVRPKAVRKNSFEIYFLAKDFAKL</sequence>